<feature type="chain" id="PRO_0000357888" description="NADH-quinone oxidoreductase subunit D">
    <location>
        <begin position="1"/>
        <end position="433"/>
    </location>
</feature>
<keyword id="KW-1003">Cell membrane</keyword>
<keyword id="KW-0472">Membrane</keyword>
<keyword id="KW-0520">NAD</keyword>
<keyword id="KW-0874">Quinone</keyword>
<keyword id="KW-1278">Translocase</keyword>
<keyword id="KW-0813">Transport</keyword>
<comment type="function">
    <text evidence="1">NDH-1 shuttles electrons from NADH, via FMN and iron-sulfur (Fe-S) centers, to quinones in the respiratory chain. The immediate electron acceptor for the enzyme in this species is believed to be a menaquinone. Couples the redox reaction to proton translocation (for every two electrons transferred, four hydrogen ions are translocated across the cytoplasmic membrane), and thus conserves the redox energy in a proton gradient.</text>
</comment>
<comment type="catalytic activity">
    <reaction evidence="1">
        <text>a quinone + NADH + 5 H(+)(in) = a quinol + NAD(+) + 4 H(+)(out)</text>
        <dbReference type="Rhea" id="RHEA:57888"/>
        <dbReference type="ChEBI" id="CHEBI:15378"/>
        <dbReference type="ChEBI" id="CHEBI:24646"/>
        <dbReference type="ChEBI" id="CHEBI:57540"/>
        <dbReference type="ChEBI" id="CHEBI:57945"/>
        <dbReference type="ChEBI" id="CHEBI:132124"/>
    </reaction>
</comment>
<comment type="subunit">
    <text evidence="1">NDH-1 is composed of 14 different subunits. Subunits NuoB, C, D, E, F, and G constitute the peripheral sector of the complex.</text>
</comment>
<comment type="subcellular location">
    <subcellularLocation>
        <location evidence="1">Cell membrane</location>
        <topology evidence="1">Peripheral membrane protein</topology>
        <orientation evidence="1">Cytoplasmic side</orientation>
    </subcellularLocation>
</comment>
<comment type="similarity">
    <text evidence="1">Belongs to the complex I 49 kDa subunit family.</text>
</comment>
<organism>
    <name type="scientific">Cutibacterium acnes (strain DSM 16379 / KPA171202)</name>
    <name type="common">Propionibacterium acnes</name>
    <dbReference type="NCBI Taxonomy" id="267747"/>
    <lineage>
        <taxon>Bacteria</taxon>
        <taxon>Bacillati</taxon>
        <taxon>Actinomycetota</taxon>
        <taxon>Actinomycetes</taxon>
        <taxon>Propionibacteriales</taxon>
        <taxon>Propionibacteriaceae</taxon>
        <taxon>Cutibacterium</taxon>
    </lineage>
</organism>
<evidence type="ECO:0000255" key="1">
    <source>
        <dbReference type="HAMAP-Rule" id="MF_01358"/>
    </source>
</evidence>
<name>NUOD_CUTAK</name>
<sequence>MSENHEYLSQGGDWAQIVDEAAERGDETVVVNFGPSHPSTHGVMRLIIELDGESVSDLRVGIGFLHTGIEKNMEFRTWTQGVTFMTRCNYVANFFNELVYCLAVEKLLGITDDVPERARVLRVMITELNRISSHLIAVGTGGLELGASSVAEVGLREREIILEFNQAVTGLRMNNAWIRPGGVATDLPETGLDQLRDLIKRMEKYLPEIGQFCNENPIFKARTQGIGYADLSTCMALGVTGPALRATGLPWDLRKTQPYCDYDTYDFDVATWDTCDCYGRFRIRLEEMDQSVRILKQCLKRLEDTQGDRHMVEDPHIAWPAELALGPDGQGNSNEHIRHIMGESMEALIHHFKIVTEGFRVPAGQVYQAIEGAGGELGCHLVSDGGVRPYRSHLRDPGFVNVQSLPAMCEGGMLSDVVPSLASLDPVMGGVDR</sequence>
<dbReference type="EC" id="7.1.1.-" evidence="1"/>
<dbReference type="EMBL" id="AE017283">
    <property type="protein sequence ID" value="AAT83652.1"/>
    <property type="molecule type" value="Genomic_DNA"/>
</dbReference>
<dbReference type="RefSeq" id="WP_002514932.1">
    <property type="nucleotide sequence ID" value="NZ_CP025935.1"/>
</dbReference>
<dbReference type="SMR" id="Q6A6G1"/>
<dbReference type="EnsemblBacteria" id="AAT83652">
    <property type="protein sequence ID" value="AAT83652"/>
    <property type="gene ID" value="PPA1933"/>
</dbReference>
<dbReference type="KEGG" id="pac:PPA1933"/>
<dbReference type="eggNOG" id="COG0649">
    <property type="taxonomic scope" value="Bacteria"/>
</dbReference>
<dbReference type="HOGENOM" id="CLU_015134_1_2_11"/>
<dbReference type="Proteomes" id="UP000000603">
    <property type="component" value="Chromosome"/>
</dbReference>
<dbReference type="GO" id="GO:0005886">
    <property type="term" value="C:plasma membrane"/>
    <property type="evidence" value="ECO:0007669"/>
    <property type="project" value="UniProtKB-SubCell"/>
</dbReference>
<dbReference type="GO" id="GO:0051287">
    <property type="term" value="F:NAD binding"/>
    <property type="evidence" value="ECO:0007669"/>
    <property type="project" value="InterPro"/>
</dbReference>
<dbReference type="GO" id="GO:0050136">
    <property type="term" value="F:NADH:ubiquinone reductase (non-electrogenic) activity"/>
    <property type="evidence" value="ECO:0007669"/>
    <property type="project" value="UniProtKB-UniRule"/>
</dbReference>
<dbReference type="GO" id="GO:0048038">
    <property type="term" value="F:quinone binding"/>
    <property type="evidence" value="ECO:0007669"/>
    <property type="project" value="UniProtKB-KW"/>
</dbReference>
<dbReference type="Gene3D" id="1.10.645.10">
    <property type="entry name" value="Cytochrome-c3 Hydrogenase, chain B"/>
    <property type="match status" value="1"/>
</dbReference>
<dbReference type="HAMAP" id="MF_01358">
    <property type="entry name" value="NDH1_NuoD"/>
    <property type="match status" value="1"/>
</dbReference>
<dbReference type="InterPro" id="IPR001135">
    <property type="entry name" value="NADH_Q_OxRdtase_suD"/>
</dbReference>
<dbReference type="InterPro" id="IPR014029">
    <property type="entry name" value="NADH_UbQ_OxRdtase_49kDa_CS"/>
</dbReference>
<dbReference type="InterPro" id="IPR022885">
    <property type="entry name" value="NDH1_su_D/H"/>
</dbReference>
<dbReference type="InterPro" id="IPR029014">
    <property type="entry name" value="NiFe-Hase_large"/>
</dbReference>
<dbReference type="NCBIfam" id="TIGR01962">
    <property type="entry name" value="NuoD"/>
    <property type="match status" value="1"/>
</dbReference>
<dbReference type="NCBIfam" id="NF004739">
    <property type="entry name" value="PRK06075.1"/>
    <property type="match status" value="1"/>
</dbReference>
<dbReference type="PANTHER" id="PTHR11993:SF10">
    <property type="entry name" value="NADH DEHYDROGENASE [UBIQUINONE] IRON-SULFUR PROTEIN 2, MITOCHONDRIAL"/>
    <property type="match status" value="1"/>
</dbReference>
<dbReference type="PANTHER" id="PTHR11993">
    <property type="entry name" value="NADH-UBIQUINONE OXIDOREDUCTASE 49 KDA SUBUNIT"/>
    <property type="match status" value="1"/>
</dbReference>
<dbReference type="Pfam" id="PF00346">
    <property type="entry name" value="Complex1_49kDa"/>
    <property type="match status" value="1"/>
</dbReference>
<dbReference type="SUPFAM" id="SSF56762">
    <property type="entry name" value="HydB/Nqo4-like"/>
    <property type="match status" value="1"/>
</dbReference>
<dbReference type="PROSITE" id="PS00535">
    <property type="entry name" value="COMPLEX1_49K"/>
    <property type="match status" value="1"/>
</dbReference>
<protein>
    <recommendedName>
        <fullName evidence="1">NADH-quinone oxidoreductase subunit D</fullName>
        <ecNumber evidence="1">7.1.1.-</ecNumber>
    </recommendedName>
    <alternativeName>
        <fullName evidence="1">NADH dehydrogenase I subunit D</fullName>
    </alternativeName>
    <alternativeName>
        <fullName evidence="1">NDH-1 subunit D</fullName>
    </alternativeName>
</protein>
<reference key="1">
    <citation type="journal article" date="2004" name="Science">
        <title>The complete genome sequence of Propionibacterium acnes, a commensal of human skin.</title>
        <authorList>
            <person name="Brueggemann H."/>
            <person name="Henne A."/>
            <person name="Hoster F."/>
            <person name="Liesegang H."/>
            <person name="Wiezer A."/>
            <person name="Strittmatter A."/>
            <person name="Hujer S."/>
            <person name="Duerre P."/>
            <person name="Gottschalk G."/>
        </authorList>
    </citation>
    <scope>NUCLEOTIDE SEQUENCE [LARGE SCALE GENOMIC DNA]</scope>
    <source>
        <strain>DSM 16379 / KPA171202</strain>
    </source>
</reference>
<accession>Q6A6G1</accession>
<proteinExistence type="inferred from homology"/>
<gene>
    <name evidence="1" type="primary">nuoD</name>
    <name type="ordered locus">PPA1933</name>
</gene>